<name>RS4_SYNJB</name>
<dbReference type="EMBL" id="CP000240">
    <property type="protein sequence ID" value="ABD02071.1"/>
    <property type="molecule type" value="Genomic_DNA"/>
</dbReference>
<dbReference type="RefSeq" id="WP_011432724.1">
    <property type="nucleotide sequence ID" value="NC_007776.1"/>
</dbReference>
<dbReference type="SMR" id="Q2JMH0"/>
<dbReference type="STRING" id="321332.CYB_1094"/>
<dbReference type="KEGG" id="cyb:CYB_1094"/>
<dbReference type="eggNOG" id="COG0522">
    <property type="taxonomic scope" value="Bacteria"/>
</dbReference>
<dbReference type="HOGENOM" id="CLU_092403_0_5_3"/>
<dbReference type="OrthoDB" id="9803672at2"/>
<dbReference type="Proteomes" id="UP000001938">
    <property type="component" value="Chromosome"/>
</dbReference>
<dbReference type="GO" id="GO:0015935">
    <property type="term" value="C:small ribosomal subunit"/>
    <property type="evidence" value="ECO:0007669"/>
    <property type="project" value="InterPro"/>
</dbReference>
<dbReference type="GO" id="GO:0019843">
    <property type="term" value="F:rRNA binding"/>
    <property type="evidence" value="ECO:0007669"/>
    <property type="project" value="UniProtKB-UniRule"/>
</dbReference>
<dbReference type="GO" id="GO:0003735">
    <property type="term" value="F:structural constituent of ribosome"/>
    <property type="evidence" value="ECO:0007669"/>
    <property type="project" value="InterPro"/>
</dbReference>
<dbReference type="GO" id="GO:0042274">
    <property type="term" value="P:ribosomal small subunit biogenesis"/>
    <property type="evidence" value="ECO:0007669"/>
    <property type="project" value="TreeGrafter"/>
</dbReference>
<dbReference type="GO" id="GO:0006412">
    <property type="term" value="P:translation"/>
    <property type="evidence" value="ECO:0007669"/>
    <property type="project" value="UniProtKB-UniRule"/>
</dbReference>
<dbReference type="CDD" id="cd00165">
    <property type="entry name" value="S4"/>
    <property type="match status" value="1"/>
</dbReference>
<dbReference type="FunFam" id="3.10.290.10:FF:000001">
    <property type="entry name" value="30S ribosomal protein S4"/>
    <property type="match status" value="1"/>
</dbReference>
<dbReference type="FunFam" id="1.10.1050.10:FF:000002">
    <property type="entry name" value="30S ribosomal protein S4, chloroplastic"/>
    <property type="match status" value="1"/>
</dbReference>
<dbReference type="Gene3D" id="1.10.1050.10">
    <property type="entry name" value="Ribosomal Protein S4 Delta 41, Chain A, domain 1"/>
    <property type="match status" value="1"/>
</dbReference>
<dbReference type="Gene3D" id="3.10.290.10">
    <property type="entry name" value="RNA-binding S4 domain"/>
    <property type="match status" value="1"/>
</dbReference>
<dbReference type="HAMAP" id="MF_01306_B">
    <property type="entry name" value="Ribosomal_uS4_B"/>
    <property type="match status" value="1"/>
</dbReference>
<dbReference type="InterPro" id="IPR022801">
    <property type="entry name" value="Ribosomal_uS4"/>
</dbReference>
<dbReference type="InterPro" id="IPR005709">
    <property type="entry name" value="Ribosomal_uS4_bac-type"/>
</dbReference>
<dbReference type="InterPro" id="IPR018079">
    <property type="entry name" value="Ribosomal_uS4_CS"/>
</dbReference>
<dbReference type="InterPro" id="IPR001912">
    <property type="entry name" value="Ribosomal_uS4_N"/>
</dbReference>
<dbReference type="InterPro" id="IPR002942">
    <property type="entry name" value="S4_RNA-bd"/>
</dbReference>
<dbReference type="InterPro" id="IPR036986">
    <property type="entry name" value="S4_RNA-bd_sf"/>
</dbReference>
<dbReference type="NCBIfam" id="NF003717">
    <property type="entry name" value="PRK05327.1"/>
    <property type="match status" value="1"/>
</dbReference>
<dbReference type="NCBIfam" id="TIGR01017">
    <property type="entry name" value="rpsD_bact"/>
    <property type="match status" value="1"/>
</dbReference>
<dbReference type="PANTHER" id="PTHR11831">
    <property type="entry name" value="30S 40S RIBOSOMAL PROTEIN"/>
    <property type="match status" value="1"/>
</dbReference>
<dbReference type="PANTHER" id="PTHR11831:SF4">
    <property type="entry name" value="SMALL RIBOSOMAL SUBUNIT PROTEIN US4M"/>
    <property type="match status" value="1"/>
</dbReference>
<dbReference type="Pfam" id="PF00163">
    <property type="entry name" value="Ribosomal_S4"/>
    <property type="match status" value="1"/>
</dbReference>
<dbReference type="Pfam" id="PF01479">
    <property type="entry name" value="S4"/>
    <property type="match status" value="1"/>
</dbReference>
<dbReference type="SMART" id="SM01390">
    <property type="entry name" value="Ribosomal_S4"/>
    <property type="match status" value="1"/>
</dbReference>
<dbReference type="SMART" id="SM00363">
    <property type="entry name" value="S4"/>
    <property type="match status" value="1"/>
</dbReference>
<dbReference type="SUPFAM" id="SSF55174">
    <property type="entry name" value="Alpha-L RNA-binding motif"/>
    <property type="match status" value="1"/>
</dbReference>
<dbReference type="PROSITE" id="PS00632">
    <property type="entry name" value="RIBOSOMAL_S4"/>
    <property type="match status" value="1"/>
</dbReference>
<dbReference type="PROSITE" id="PS50889">
    <property type="entry name" value="S4"/>
    <property type="match status" value="1"/>
</dbReference>
<accession>Q2JMH0</accession>
<proteinExistence type="inferred from homology"/>
<comment type="function">
    <text evidence="1">One of the primary rRNA binding proteins, it binds directly to 16S rRNA where it nucleates assembly of the body of the 30S subunit.</text>
</comment>
<comment type="function">
    <text evidence="1">With S5 and S12 plays an important role in translational accuracy.</text>
</comment>
<comment type="subunit">
    <text evidence="1">Part of the 30S ribosomal subunit. Contacts protein S5. The interaction surface between S4 and S5 is involved in control of translational fidelity.</text>
</comment>
<comment type="similarity">
    <text evidence="1">Belongs to the universal ribosomal protein uS4 family.</text>
</comment>
<reference key="1">
    <citation type="journal article" date="2007" name="ISME J.">
        <title>Population level functional diversity in a microbial community revealed by comparative genomic and metagenomic analyses.</title>
        <authorList>
            <person name="Bhaya D."/>
            <person name="Grossman A.R."/>
            <person name="Steunou A.-S."/>
            <person name="Khuri N."/>
            <person name="Cohan F.M."/>
            <person name="Hamamura N."/>
            <person name="Melendrez M.C."/>
            <person name="Bateson M.M."/>
            <person name="Ward D.M."/>
            <person name="Heidelberg J.F."/>
        </authorList>
    </citation>
    <scope>NUCLEOTIDE SEQUENCE [LARGE SCALE GENOMIC DNA]</scope>
    <source>
        <strain>JA-2-3B'a(2-13)</strain>
    </source>
</reference>
<organism>
    <name type="scientific">Synechococcus sp. (strain JA-2-3B'a(2-13))</name>
    <name type="common">Cyanobacteria bacterium Yellowstone B-Prime</name>
    <dbReference type="NCBI Taxonomy" id="321332"/>
    <lineage>
        <taxon>Bacteria</taxon>
        <taxon>Bacillati</taxon>
        <taxon>Cyanobacteriota</taxon>
        <taxon>Cyanophyceae</taxon>
        <taxon>Synechococcales</taxon>
        <taxon>Synechococcaceae</taxon>
        <taxon>Synechococcus</taxon>
    </lineage>
</organism>
<protein>
    <recommendedName>
        <fullName evidence="1">Small ribosomal subunit protein uS4</fullName>
    </recommendedName>
    <alternativeName>
        <fullName evidence="3">30S ribosomal protein S4</fullName>
    </alternativeName>
</protein>
<evidence type="ECO:0000255" key="1">
    <source>
        <dbReference type="HAMAP-Rule" id="MF_01306"/>
    </source>
</evidence>
<evidence type="ECO:0000256" key="2">
    <source>
        <dbReference type="SAM" id="MobiDB-lite"/>
    </source>
</evidence>
<evidence type="ECO:0000305" key="3"/>
<sequence>MSRYTGPRLKIIRRFGGLDLPGLTRKRPKNTNPPGMHGAERKKKSEYAIRLEEKQKVRFNYGLSERQMIRYMRKARRSKGSTGLALLQMLEMRLDCIVFRLGMAPTIPAARQLVSHGHIEVNGQKVTIPSYGCKVGDVITVKNKESSRKLVAAYAEYPGLFLPDYLEFDKEKLRGRIKELPPREQICAPVNELLVVEFYSRKL</sequence>
<feature type="chain" id="PRO_0000293387" description="Small ribosomal subunit protein uS4">
    <location>
        <begin position="1"/>
        <end position="203"/>
    </location>
</feature>
<feature type="domain" description="S4 RNA-binding" evidence="1">
    <location>
        <begin position="92"/>
        <end position="155"/>
    </location>
</feature>
<feature type="region of interest" description="Disordered" evidence="2">
    <location>
        <begin position="20"/>
        <end position="44"/>
    </location>
</feature>
<keyword id="KW-1185">Reference proteome</keyword>
<keyword id="KW-0687">Ribonucleoprotein</keyword>
<keyword id="KW-0689">Ribosomal protein</keyword>
<keyword id="KW-0694">RNA-binding</keyword>
<keyword id="KW-0699">rRNA-binding</keyword>
<gene>
    <name evidence="1" type="primary">rpsD</name>
    <name evidence="1" type="synonym">rps4</name>
    <name type="ordered locus">CYB_1094</name>
</gene>